<proteinExistence type="evidence at protein level"/>
<feature type="chain" id="PRO_0000147375" description="Iron-sulfur cluster assembly protein SufD">
    <location>
        <begin position="1"/>
        <end position="423"/>
    </location>
</feature>
<feature type="helix" evidence="5">
    <location>
        <begin position="10"/>
        <end position="19"/>
    </location>
</feature>
<feature type="helix" evidence="5">
    <location>
        <begin position="27"/>
        <end position="39"/>
    </location>
</feature>
<feature type="strand" evidence="7">
    <location>
        <begin position="50"/>
        <end position="52"/>
    </location>
</feature>
<feature type="helix" evidence="5">
    <location>
        <begin position="55"/>
        <end position="58"/>
    </location>
</feature>
<feature type="strand" evidence="7">
    <location>
        <begin position="59"/>
        <end position="63"/>
    </location>
</feature>
<feature type="helix" evidence="5">
    <location>
        <begin position="71"/>
        <end position="77"/>
    </location>
</feature>
<feature type="strand" evidence="5">
    <location>
        <begin position="83"/>
        <end position="89"/>
    </location>
</feature>
<feature type="helix" evidence="5">
    <location>
        <begin position="95"/>
        <end position="97"/>
    </location>
</feature>
<feature type="turn" evidence="6">
    <location>
        <begin position="102"/>
        <end position="105"/>
    </location>
</feature>
<feature type="strand" evidence="5">
    <location>
        <begin position="107"/>
        <end position="112"/>
    </location>
</feature>
<feature type="helix" evidence="5">
    <location>
        <begin position="125"/>
        <end position="133"/>
    </location>
</feature>
<feature type="strand" evidence="5">
    <location>
        <begin position="137"/>
        <end position="142"/>
    </location>
</feature>
<feature type="strand" evidence="5">
    <location>
        <begin position="152"/>
        <end position="158"/>
    </location>
</feature>
<feature type="strand" evidence="5">
    <location>
        <begin position="162"/>
        <end position="164"/>
    </location>
</feature>
<feature type="strand" evidence="5">
    <location>
        <begin position="166"/>
        <end position="177"/>
    </location>
</feature>
<feature type="strand" evidence="5">
    <location>
        <begin position="182"/>
        <end position="195"/>
    </location>
</feature>
<feature type="strand" evidence="5">
    <location>
        <begin position="197"/>
        <end position="207"/>
    </location>
</feature>
<feature type="strand" evidence="5">
    <location>
        <begin position="212"/>
        <end position="219"/>
    </location>
</feature>
<feature type="strand" evidence="5">
    <location>
        <begin position="226"/>
        <end position="235"/>
    </location>
</feature>
<feature type="strand" evidence="5">
    <location>
        <begin position="240"/>
        <end position="247"/>
    </location>
</feature>
<feature type="strand" evidence="5">
    <location>
        <begin position="251"/>
        <end position="261"/>
    </location>
</feature>
<feature type="strand" evidence="6">
    <location>
        <begin position="263"/>
        <end position="265"/>
    </location>
</feature>
<feature type="strand" evidence="5">
    <location>
        <begin position="267"/>
        <end position="274"/>
    </location>
</feature>
<feature type="strand" evidence="5">
    <location>
        <begin position="281"/>
        <end position="290"/>
    </location>
</feature>
<feature type="strand" evidence="5">
    <location>
        <begin position="292"/>
        <end position="294"/>
    </location>
</feature>
<feature type="strand" evidence="5">
    <location>
        <begin position="296"/>
        <end position="305"/>
    </location>
</feature>
<feature type="strand" evidence="5">
    <location>
        <begin position="310"/>
        <end position="319"/>
    </location>
</feature>
<feature type="strand" evidence="5">
    <location>
        <begin position="326"/>
        <end position="336"/>
    </location>
</feature>
<feature type="strand" evidence="7">
    <location>
        <begin position="338"/>
        <end position="340"/>
    </location>
</feature>
<feature type="strand" evidence="5">
    <location>
        <begin position="342"/>
        <end position="351"/>
    </location>
</feature>
<feature type="strand" evidence="5">
    <location>
        <begin position="354"/>
        <end position="365"/>
    </location>
</feature>
<feature type="helix" evidence="5">
    <location>
        <begin position="369"/>
        <end position="377"/>
    </location>
</feature>
<feature type="helix" evidence="5">
    <location>
        <begin position="382"/>
        <end position="398"/>
    </location>
</feature>
<feature type="helix" evidence="6">
    <location>
        <begin position="399"/>
        <end position="401"/>
    </location>
</feature>
<feature type="helix" evidence="5">
    <location>
        <begin position="404"/>
        <end position="415"/>
    </location>
</feature>
<feature type="turn" evidence="6">
    <location>
        <begin position="419"/>
        <end position="421"/>
    </location>
</feature>
<reference key="1">
    <citation type="journal article" date="1996" name="DNA Res.">
        <title>A 570-kb DNA sequence of the Escherichia coli K-12 genome corresponding to the 28.0-40.1 min region on the linkage map.</title>
        <authorList>
            <person name="Aiba H."/>
            <person name="Baba T."/>
            <person name="Fujita K."/>
            <person name="Hayashi K."/>
            <person name="Inada T."/>
            <person name="Isono K."/>
            <person name="Itoh T."/>
            <person name="Kasai H."/>
            <person name="Kashimoto K."/>
            <person name="Kimura S."/>
            <person name="Kitakawa M."/>
            <person name="Kitagawa M."/>
            <person name="Makino K."/>
            <person name="Miki T."/>
            <person name="Mizobuchi K."/>
            <person name="Mori H."/>
            <person name="Mori T."/>
            <person name="Motomura K."/>
            <person name="Nakade S."/>
            <person name="Nakamura Y."/>
            <person name="Nashimoto H."/>
            <person name="Nishio Y."/>
            <person name="Oshima T."/>
            <person name="Saito N."/>
            <person name="Sampei G."/>
            <person name="Seki Y."/>
            <person name="Sivasundaram S."/>
            <person name="Tagami H."/>
            <person name="Takeda J."/>
            <person name="Takemoto K."/>
            <person name="Takeuchi Y."/>
            <person name="Wada C."/>
            <person name="Yamamoto Y."/>
            <person name="Horiuchi T."/>
        </authorList>
    </citation>
    <scope>NUCLEOTIDE SEQUENCE [LARGE SCALE GENOMIC DNA]</scope>
    <source>
        <strain>K12 / W3110 / ATCC 27325 / DSM 5911</strain>
    </source>
</reference>
<reference key="2">
    <citation type="journal article" date="1997" name="Science">
        <title>The complete genome sequence of Escherichia coli K-12.</title>
        <authorList>
            <person name="Blattner F.R."/>
            <person name="Plunkett G. III"/>
            <person name="Bloch C.A."/>
            <person name="Perna N.T."/>
            <person name="Burland V."/>
            <person name="Riley M."/>
            <person name="Collado-Vides J."/>
            <person name="Glasner J.D."/>
            <person name="Rode C.K."/>
            <person name="Mayhew G.F."/>
            <person name="Gregor J."/>
            <person name="Davis N.W."/>
            <person name="Kirkpatrick H.A."/>
            <person name="Goeden M.A."/>
            <person name="Rose D.J."/>
            <person name="Mau B."/>
            <person name="Shao Y."/>
        </authorList>
    </citation>
    <scope>NUCLEOTIDE SEQUENCE [LARGE SCALE GENOMIC DNA]</scope>
    <source>
        <strain>K12 / MG1655 / ATCC 47076</strain>
    </source>
</reference>
<reference key="3">
    <citation type="journal article" date="2006" name="Mol. Syst. Biol.">
        <title>Highly accurate genome sequences of Escherichia coli K-12 strains MG1655 and W3110.</title>
        <authorList>
            <person name="Hayashi K."/>
            <person name="Morooka N."/>
            <person name="Yamamoto Y."/>
            <person name="Fujita K."/>
            <person name="Isono K."/>
            <person name="Choi S."/>
            <person name="Ohtsubo E."/>
            <person name="Baba T."/>
            <person name="Wanner B.L."/>
            <person name="Mori H."/>
            <person name="Horiuchi T."/>
        </authorList>
    </citation>
    <scope>NUCLEOTIDE SEQUENCE [LARGE SCALE GENOMIC DNA]</scope>
    <source>
        <strain>K12 / W3110 / ATCC 27325 / DSM 5911</strain>
    </source>
</reference>
<reference key="4">
    <citation type="journal article" date="1999" name="J. Bacteriol.">
        <title>SufS is a NifS-like protein, and SufD is necessary for stability of the 2Fe-2S FhuF protein in Escherichia coli.</title>
        <authorList>
            <person name="Patzer S.I."/>
            <person name="Hantke K."/>
        </authorList>
    </citation>
    <scope>FUNCTION</scope>
    <source>
        <strain>K12 / MG1655 / ATCC 47076</strain>
    </source>
</reference>
<reference key="5">
    <citation type="journal article" date="2003" name="J. Biol. Chem.">
        <title>The SufE protein and the SufBCD complex enhance SufS cysteine desulfurase activity as part of a sulfur transfer pathway for Fe-S cluster assembly in Escherichia coli.</title>
        <authorList>
            <person name="Outten F.W."/>
            <person name="Wood M.J."/>
            <person name="Munoz F.M."/>
            <person name="Storz G."/>
        </authorList>
    </citation>
    <scope>FUNCTION</scope>
    <scope>SUBUNIT</scope>
</reference>
<reference key="6">
    <citation type="journal article" date="2005" name="Proteins">
        <title>Structural analysis of a set of proteins resulting from a bacterial genomics project.</title>
        <authorList>
            <person name="Badger J."/>
            <person name="Sauder J.M."/>
            <person name="Adams J.M."/>
            <person name="Antonysamy S."/>
            <person name="Bain K."/>
            <person name="Bergseid M.G."/>
            <person name="Buchanan S.G."/>
            <person name="Buchanan M.D."/>
            <person name="Batiyenko Y."/>
            <person name="Christopher J.A."/>
            <person name="Emtage S."/>
            <person name="Eroshkina A."/>
            <person name="Feil I."/>
            <person name="Furlong E.B."/>
            <person name="Gajiwala K.S."/>
            <person name="Gao X."/>
            <person name="He D."/>
            <person name="Hendle J."/>
            <person name="Huber A."/>
            <person name="Hoda K."/>
            <person name="Kearins P."/>
            <person name="Kissinger C."/>
            <person name="Laubert B."/>
            <person name="Lewis H.A."/>
            <person name="Lin J."/>
            <person name="Loomis K."/>
            <person name="Lorimer D."/>
            <person name="Louie G."/>
            <person name="Maletic M."/>
            <person name="Marsh C.D."/>
            <person name="Miller I."/>
            <person name="Molinari J."/>
            <person name="Muller-Dieckmann H.J."/>
            <person name="Newman J.M."/>
            <person name="Noland B.W."/>
            <person name="Pagarigan B."/>
            <person name="Park F."/>
            <person name="Peat T.S."/>
            <person name="Post K.W."/>
            <person name="Radojicic S."/>
            <person name="Ramos A."/>
            <person name="Romero R."/>
            <person name="Rutter M.E."/>
            <person name="Sanderson W.E."/>
            <person name="Schwinn K.D."/>
            <person name="Tresser J."/>
            <person name="Winhoven J."/>
            <person name="Wright T.A."/>
            <person name="Wu L."/>
            <person name="Xu J."/>
            <person name="Harris T.J.R."/>
        </authorList>
    </citation>
    <scope>X-RAY CRYSTALLOGRAPHY (1.75 ANGSTROMS)</scope>
    <scope>SUBUNIT</scope>
</reference>
<accession>P77689</accession>
<organism>
    <name type="scientific">Escherichia coli (strain K12)</name>
    <dbReference type="NCBI Taxonomy" id="83333"/>
    <lineage>
        <taxon>Bacteria</taxon>
        <taxon>Pseudomonadati</taxon>
        <taxon>Pseudomonadota</taxon>
        <taxon>Gammaproteobacteria</taxon>
        <taxon>Enterobacterales</taxon>
        <taxon>Enterobacteriaceae</taxon>
        <taxon>Escherichia</taxon>
    </lineage>
</organism>
<sequence>MAGLPNSSNALQQWHHLFEAEGTKRSPQAQQHLQQLLRTGLPTRKHENWKYTPLEGLINSQFVSIAGEISPQQRDALALTLDSVRLVFVDGRYVPALSDATEGSGYEVSINDDRQGLPDAIQAEVFLHLTESLAQSVTHIAVKRGQRPAKPLLLMHITQGVAGEEVNTAHYRHHLDLAEGAEATVIEHFVSLNDARHFTGARFTINVAANAHLQHIKLAFENPLSHHFAHNDLLLAEDATAFSHSFLLGGAVLRHNTSTQLNGENSTLRINSLAMPVKNEVCDTRTWLEHNKGFCNSRQLHKTIVSDKGRAVFNGLINVAQHAIKTDGQMTNNNLLMGKLAEVDTKPQLEIYADDVKCSHGATVGRIDDEQIFYLRSRGINQQDAQQMIIYAFAAELTEALRDEGLKQQVLARIGQRLPGGAR</sequence>
<evidence type="ECO:0000269" key="1">
    <source>
    </source>
</evidence>
<evidence type="ECO:0000269" key="2">
    <source>
    </source>
</evidence>
<evidence type="ECO:0000269" key="3">
    <source>
    </source>
</evidence>
<evidence type="ECO:0000305" key="4"/>
<evidence type="ECO:0007829" key="5">
    <source>
        <dbReference type="PDB" id="1VH4"/>
    </source>
</evidence>
<evidence type="ECO:0007829" key="6">
    <source>
        <dbReference type="PDB" id="2ZU0"/>
    </source>
</evidence>
<evidence type="ECO:0007829" key="7">
    <source>
        <dbReference type="PDB" id="5AWF"/>
    </source>
</evidence>
<dbReference type="EMBL" id="U00096">
    <property type="protein sequence ID" value="AAC74751.1"/>
    <property type="molecule type" value="Genomic_DNA"/>
</dbReference>
<dbReference type="EMBL" id="AP009048">
    <property type="protein sequence ID" value="BAA15456.1"/>
    <property type="molecule type" value="Genomic_DNA"/>
</dbReference>
<dbReference type="PIR" id="A64926">
    <property type="entry name" value="A64926"/>
</dbReference>
<dbReference type="RefSeq" id="NP_416196.1">
    <property type="nucleotide sequence ID" value="NC_000913.3"/>
</dbReference>
<dbReference type="RefSeq" id="WP_000907979.1">
    <property type="nucleotide sequence ID" value="NZ_SSZK01000001.1"/>
</dbReference>
<dbReference type="PDB" id="1VH4">
    <property type="method" value="X-ray"/>
    <property type="resolution" value="1.75 A"/>
    <property type="chains" value="A/B=1-423"/>
</dbReference>
<dbReference type="PDB" id="2ZU0">
    <property type="method" value="X-ray"/>
    <property type="resolution" value="2.20 A"/>
    <property type="chains" value="A/B=1-423"/>
</dbReference>
<dbReference type="PDB" id="5AWF">
    <property type="method" value="X-ray"/>
    <property type="resolution" value="2.96 A"/>
    <property type="chains" value="B/F=1-423"/>
</dbReference>
<dbReference type="PDB" id="5AWG">
    <property type="method" value="X-ray"/>
    <property type="resolution" value="4.28 A"/>
    <property type="chains" value="B/F=1-423"/>
</dbReference>
<dbReference type="PDBsum" id="1VH4"/>
<dbReference type="PDBsum" id="2ZU0"/>
<dbReference type="PDBsum" id="5AWF"/>
<dbReference type="PDBsum" id="5AWG"/>
<dbReference type="SMR" id="P77689"/>
<dbReference type="BioGRID" id="4260280">
    <property type="interactions" value="84"/>
</dbReference>
<dbReference type="BioGRID" id="849278">
    <property type="interactions" value="2"/>
</dbReference>
<dbReference type="ComplexPortal" id="CPX-2123">
    <property type="entry name" value="sufBCD complex"/>
</dbReference>
<dbReference type="DIP" id="DIP-10940N"/>
<dbReference type="FunCoup" id="P77689">
    <property type="interactions" value="499"/>
</dbReference>
<dbReference type="IntAct" id="P77689">
    <property type="interactions" value="8"/>
</dbReference>
<dbReference type="MINT" id="P77689"/>
<dbReference type="STRING" id="511145.b1681"/>
<dbReference type="jPOST" id="P77689"/>
<dbReference type="PaxDb" id="511145-b1681"/>
<dbReference type="EnsemblBacteria" id="AAC74751">
    <property type="protein sequence ID" value="AAC74751"/>
    <property type="gene ID" value="b1681"/>
</dbReference>
<dbReference type="GeneID" id="944878"/>
<dbReference type="KEGG" id="ecj:JW1671"/>
<dbReference type="KEGG" id="eco:b1681"/>
<dbReference type="KEGG" id="ecoc:C3026_09630"/>
<dbReference type="PATRIC" id="fig|1411691.4.peg.577"/>
<dbReference type="EchoBASE" id="EB3721"/>
<dbReference type="eggNOG" id="COG0719">
    <property type="taxonomic scope" value="Bacteria"/>
</dbReference>
<dbReference type="HOGENOM" id="CLU_026231_5_0_6"/>
<dbReference type="InParanoid" id="P77689"/>
<dbReference type="OMA" id="CSHGCTI"/>
<dbReference type="OrthoDB" id="9768262at2"/>
<dbReference type="PhylomeDB" id="P77689"/>
<dbReference type="BioCyc" id="EcoCyc:G6907-MONOMER"/>
<dbReference type="EvolutionaryTrace" id="P77689"/>
<dbReference type="PRO" id="PR:P77689"/>
<dbReference type="Proteomes" id="UP000000625">
    <property type="component" value="Chromosome"/>
</dbReference>
<dbReference type="GO" id="GO:1990229">
    <property type="term" value="C:iron-sulfur cluster assembly complex"/>
    <property type="evidence" value="ECO:0000314"/>
    <property type="project" value="EcoCyc"/>
</dbReference>
<dbReference type="GO" id="GO:0016226">
    <property type="term" value="P:iron-sulfur cluster assembly"/>
    <property type="evidence" value="ECO:0000314"/>
    <property type="project" value="EcoCyc"/>
</dbReference>
<dbReference type="GO" id="GO:0006979">
    <property type="term" value="P:response to oxidative stress"/>
    <property type="evidence" value="ECO:0000315"/>
    <property type="project" value="EcoCyc"/>
</dbReference>
<dbReference type="InterPro" id="IPR055346">
    <property type="entry name" value="Fe-S_cluster_assembly_SufBD"/>
</dbReference>
<dbReference type="InterPro" id="IPR000825">
    <property type="entry name" value="SUF_FeS_clus_asmbl_SufBD_core"/>
</dbReference>
<dbReference type="InterPro" id="IPR037284">
    <property type="entry name" value="SUF_FeS_clus_asmbl_SufBD_sf"/>
</dbReference>
<dbReference type="InterPro" id="IPR011542">
    <property type="entry name" value="SUF_FeS_clus_asmbl_SufD"/>
</dbReference>
<dbReference type="NCBIfam" id="NF008194">
    <property type="entry name" value="PRK10948.1"/>
    <property type="match status" value="1"/>
</dbReference>
<dbReference type="NCBIfam" id="TIGR01981">
    <property type="entry name" value="sufD"/>
    <property type="match status" value="1"/>
</dbReference>
<dbReference type="PANTHER" id="PTHR43575">
    <property type="entry name" value="PROTEIN ABCI7, CHLOROPLASTIC"/>
    <property type="match status" value="1"/>
</dbReference>
<dbReference type="PANTHER" id="PTHR43575:SF1">
    <property type="entry name" value="PROTEIN ABCI7, CHLOROPLASTIC"/>
    <property type="match status" value="1"/>
</dbReference>
<dbReference type="Pfam" id="PF01458">
    <property type="entry name" value="SUFBD_core"/>
    <property type="match status" value="1"/>
</dbReference>
<dbReference type="SUPFAM" id="SSF101960">
    <property type="entry name" value="Stabilizer of iron transporter SufD"/>
    <property type="match status" value="1"/>
</dbReference>
<name>SUFD_ECOLI</name>
<protein>
    <recommendedName>
        <fullName>Iron-sulfur cluster assembly protein SufD</fullName>
    </recommendedName>
</protein>
<comment type="function">
    <text evidence="1 2">The SufBCD complex acts synergistically with SufE to stimulate the cysteine desulfurase activity of SufS. The SufBCD complex contributes to the assembly or repair of oxygen-labile iron-sulfur clusters under oxidative stress. May facilitate iron uptake from extracellular iron chelators under iron limitation. Required for the stability of the FhuF protein.</text>
</comment>
<comment type="subunit">
    <text evidence="2 3">Part of the SufBCD complex that contains SufB, SufC and SufD. Can form homodimers.</text>
</comment>
<comment type="interaction">
    <interactant intactId="EBI-562751">
        <id>P77689</id>
    </interactant>
    <interactant intactId="EBI-562758">
        <id>P77522</id>
        <label>sufB</label>
    </interactant>
    <organismsDiffer>false</organismsDiffer>
    <experiments>15</experiments>
</comment>
<comment type="interaction">
    <interactant intactId="EBI-562751">
        <id>P77689</id>
    </interactant>
    <interactant intactId="EBI-561601">
        <id>P77499</id>
        <label>sufC</label>
    </interactant>
    <organismsDiffer>false</organismsDiffer>
    <experiments>9</experiments>
</comment>
<comment type="similarity">
    <text evidence="4">Belongs to the iron-sulfur cluster assembly SufBD family.</text>
</comment>
<keyword id="KW-0002">3D-structure</keyword>
<keyword id="KW-1185">Reference proteome</keyword>
<gene>
    <name type="primary">sufD</name>
    <name type="synonym">ynhC</name>
    <name type="ordered locus">b1681</name>
    <name type="ordered locus">JW1671</name>
</gene>